<gene>
    <name evidence="1" type="primary">epmA</name>
    <name type="synonym">yjeA</name>
    <name type="ordered locus">BWG_3870</name>
</gene>
<name>EPMA_ECOBW</name>
<keyword id="KW-0067">ATP-binding</keyword>
<keyword id="KW-0436">Ligase</keyword>
<keyword id="KW-0547">Nucleotide-binding</keyword>
<feature type="chain" id="PRO_1000203722" description="Elongation factor P--(R)-beta-lysine ligase">
    <location>
        <begin position="1"/>
        <end position="325"/>
    </location>
</feature>
<feature type="binding site" evidence="1">
    <location>
        <begin position="76"/>
        <end position="78"/>
    </location>
    <ligand>
        <name>substrate</name>
    </ligand>
</feature>
<feature type="binding site" evidence="1">
    <location>
        <begin position="100"/>
        <end position="102"/>
    </location>
    <ligand>
        <name>ATP</name>
        <dbReference type="ChEBI" id="CHEBI:30616"/>
    </ligand>
</feature>
<feature type="binding site" evidence="1">
    <location>
        <position position="109"/>
    </location>
    <ligand>
        <name>ATP</name>
        <dbReference type="ChEBI" id="CHEBI:30616"/>
    </ligand>
</feature>
<feature type="binding site" evidence="1">
    <location>
        <position position="118"/>
    </location>
    <ligand>
        <name>substrate</name>
    </ligand>
</feature>
<feature type="binding site" evidence="1">
    <location>
        <begin position="244"/>
        <end position="245"/>
    </location>
    <ligand>
        <name>ATP</name>
        <dbReference type="ChEBI" id="CHEBI:30616"/>
    </ligand>
</feature>
<feature type="binding site" evidence="1">
    <location>
        <position position="251"/>
    </location>
    <ligand>
        <name>substrate</name>
    </ligand>
</feature>
<feature type="binding site" evidence="1">
    <location>
        <position position="300"/>
    </location>
    <ligand>
        <name>ATP</name>
        <dbReference type="ChEBI" id="CHEBI:30616"/>
    </ligand>
</feature>
<reference key="1">
    <citation type="journal article" date="2009" name="J. Bacteriol.">
        <title>Genomic sequencing reveals regulatory mutations and recombinational events in the widely used MC4100 lineage of Escherichia coli K-12.</title>
        <authorList>
            <person name="Ferenci T."/>
            <person name="Zhou Z."/>
            <person name="Betteridge T."/>
            <person name="Ren Y."/>
            <person name="Liu Y."/>
            <person name="Feng L."/>
            <person name="Reeves P.R."/>
            <person name="Wang L."/>
        </authorList>
    </citation>
    <scope>NUCLEOTIDE SEQUENCE [LARGE SCALE GENOMIC DNA]</scope>
    <source>
        <strain>K12 / MC4100 / BW2952</strain>
    </source>
</reference>
<evidence type="ECO:0000255" key="1">
    <source>
        <dbReference type="HAMAP-Rule" id="MF_00174"/>
    </source>
</evidence>
<dbReference type="EC" id="6.3.2.-" evidence="1"/>
<dbReference type="EMBL" id="CP001396">
    <property type="protein sequence ID" value="ACR64638.1"/>
    <property type="molecule type" value="Genomic_DNA"/>
</dbReference>
<dbReference type="RefSeq" id="WP_000004771.1">
    <property type="nucleotide sequence ID" value="NC_012759.1"/>
</dbReference>
<dbReference type="SMR" id="C5A1E9"/>
<dbReference type="GeneID" id="93777667"/>
<dbReference type="KEGG" id="ebw:BWG_3870"/>
<dbReference type="HOGENOM" id="CLU_008255_1_1_6"/>
<dbReference type="GO" id="GO:0005829">
    <property type="term" value="C:cytosol"/>
    <property type="evidence" value="ECO:0007669"/>
    <property type="project" value="TreeGrafter"/>
</dbReference>
<dbReference type="GO" id="GO:0016880">
    <property type="term" value="F:acid-ammonia (or amide) ligase activity"/>
    <property type="evidence" value="ECO:0007669"/>
    <property type="project" value="UniProtKB-UniRule"/>
</dbReference>
<dbReference type="GO" id="GO:0005524">
    <property type="term" value="F:ATP binding"/>
    <property type="evidence" value="ECO:0007669"/>
    <property type="project" value="UniProtKB-UniRule"/>
</dbReference>
<dbReference type="GO" id="GO:0004824">
    <property type="term" value="F:lysine-tRNA ligase activity"/>
    <property type="evidence" value="ECO:0007669"/>
    <property type="project" value="InterPro"/>
</dbReference>
<dbReference type="GO" id="GO:0000049">
    <property type="term" value="F:tRNA binding"/>
    <property type="evidence" value="ECO:0007669"/>
    <property type="project" value="TreeGrafter"/>
</dbReference>
<dbReference type="GO" id="GO:0006430">
    <property type="term" value="P:lysyl-tRNA aminoacylation"/>
    <property type="evidence" value="ECO:0007669"/>
    <property type="project" value="InterPro"/>
</dbReference>
<dbReference type="FunFam" id="3.30.930.10:FF:000017">
    <property type="entry name" value="Elongation factor P--(R)-beta-lysine ligase"/>
    <property type="match status" value="1"/>
</dbReference>
<dbReference type="Gene3D" id="3.30.930.10">
    <property type="entry name" value="Bira Bifunctional Protein, Domain 2"/>
    <property type="match status" value="1"/>
</dbReference>
<dbReference type="HAMAP" id="MF_00174">
    <property type="entry name" value="EF_P_modif_A"/>
    <property type="match status" value="1"/>
</dbReference>
<dbReference type="InterPro" id="IPR004364">
    <property type="entry name" value="Aa-tRNA-synt_II"/>
</dbReference>
<dbReference type="InterPro" id="IPR006195">
    <property type="entry name" value="aa-tRNA-synth_II"/>
</dbReference>
<dbReference type="InterPro" id="IPR045864">
    <property type="entry name" value="aa-tRNA-synth_II/BPL/LPL"/>
</dbReference>
<dbReference type="InterPro" id="IPR004525">
    <property type="entry name" value="EpmA"/>
</dbReference>
<dbReference type="InterPro" id="IPR018149">
    <property type="entry name" value="Lys-tRNA-synth_II_C"/>
</dbReference>
<dbReference type="NCBIfam" id="TIGR00462">
    <property type="entry name" value="genX"/>
    <property type="match status" value="1"/>
</dbReference>
<dbReference type="NCBIfam" id="NF006828">
    <property type="entry name" value="PRK09350.1"/>
    <property type="match status" value="1"/>
</dbReference>
<dbReference type="PANTHER" id="PTHR42918:SF6">
    <property type="entry name" value="ELONGATION FACTOR P--(R)-BETA-LYSINE LIGASE"/>
    <property type="match status" value="1"/>
</dbReference>
<dbReference type="PANTHER" id="PTHR42918">
    <property type="entry name" value="LYSYL-TRNA SYNTHETASE"/>
    <property type="match status" value="1"/>
</dbReference>
<dbReference type="Pfam" id="PF00152">
    <property type="entry name" value="tRNA-synt_2"/>
    <property type="match status" value="1"/>
</dbReference>
<dbReference type="PRINTS" id="PR00982">
    <property type="entry name" value="TRNASYNTHLYS"/>
</dbReference>
<dbReference type="SUPFAM" id="SSF55681">
    <property type="entry name" value="Class II aaRS and biotin synthetases"/>
    <property type="match status" value="1"/>
</dbReference>
<dbReference type="PROSITE" id="PS50862">
    <property type="entry name" value="AA_TRNA_LIGASE_II"/>
    <property type="match status" value="1"/>
</dbReference>
<comment type="function">
    <text evidence="1">With EpmB is involved in the beta-lysylation step of the post-translational modification of translation elongation factor P (EF-P) on 'Lys-34'. Catalyzes the ATP-dependent activation of (R)-beta-lysine produced by EpmB, forming a lysyl-adenylate, from which the beta-lysyl moiety is then transferred to the epsilon-amino group of EF-P 'Lys-34'.</text>
</comment>
<comment type="catalytic activity">
    <reaction evidence="1">
        <text>D-beta-lysine + L-lysyl-[protein] + ATP = N(6)-((3R)-3,6-diaminohexanoyl)-L-lysyl-[protein] + AMP + diphosphate + H(+)</text>
        <dbReference type="Rhea" id="RHEA:83435"/>
        <dbReference type="Rhea" id="RHEA-COMP:9752"/>
        <dbReference type="Rhea" id="RHEA-COMP:20131"/>
        <dbReference type="ChEBI" id="CHEBI:15378"/>
        <dbReference type="ChEBI" id="CHEBI:29969"/>
        <dbReference type="ChEBI" id="CHEBI:30616"/>
        <dbReference type="ChEBI" id="CHEBI:33019"/>
        <dbReference type="ChEBI" id="CHEBI:84138"/>
        <dbReference type="ChEBI" id="CHEBI:156053"/>
        <dbReference type="ChEBI" id="CHEBI:456215"/>
    </reaction>
    <physiologicalReaction direction="left-to-right" evidence="1">
        <dbReference type="Rhea" id="RHEA:83436"/>
    </physiologicalReaction>
</comment>
<comment type="subunit">
    <text evidence="1">Homodimer.</text>
</comment>
<comment type="similarity">
    <text evidence="1">Belongs to the class-II aminoacyl-tRNA synthetase family. EpmA subfamily.</text>
</comment>
<accession>C5A1E9</accession>
<sequence length="325" mass="36976">MSETASWQPSASIPNLLKRAAIMAEIRRFFADRGVLEVETPCMSQATVTDIHLVPFETRFVGPGHSQGMNLWLMTSPEYHMKRLLVAGCGPVFQLCRSFRNEEMGRYHNPEFTMLEWYRPHYDMYRLMNEVDDLLQQVLDCPAAESLSYQQAFLRYLEIDPLSADKTQLREVAAKLDLSNVADTEEDRDTLLQLLFTFGVEPNIGKEKPTFVYHFPASQASLAQISTEDHRVAERFEVYYKGIELANGFHELTDAREQQQRFEQDNRKRAARGLPQHPIDQNLIEALKVGMPDCSGVALGVDRLVMLALGAETLAEVIAFSVDRA</sequence>
<organism>
    <name type="scientific">Escherichia coli (strain K12 / MC4100 / BW2952)</name>
    <dbReference type="NCBI Taxonomy" id="595496"/>
    <lineage>
        <taxon>Bacteria</taxon>
        <taxon>Pseudomonadati</taxon>
        <taxon>Pseudomonadota</taxon>
        <taxon>Gammaproteobacteria</taxon>
        <taxon>Enterobacterales</taxon>
        <taxon>Enterobacteriaceae</taxon>
        <taxon>Escherichia</taxon>
    </lineage>
</organism>
<proteinExistence type="inferred from homology"/>
<protein>
    <recommendedName>
        <fullName evidence="1">Elongation factor P--(R)-beta-lysine ligase</fullName>
        <shortName evidence="1">EF-P--(R)-beta-lysine ligase</shortName>
        <ecNumber evidence="1">6.3.2.-</ecNumber>
    </recommendedName>
    <alternativeName>
        <fullName evidence="1">EF-P post-translational modification enzyme A</fullName>
    </alternativeName>
    <alternativeName>
        <fullName evidence="1">EF-P-lysine lysyltransferase</fullName>
    </alternativeName>
</protein>